<feature type="chain" id="PRO_0000237359" description="Glutamate--tRNA ligase">
    <location>
        <begin position="1"/>
        <end position="464"/>
    </location>
</feature>
<feature type="short sequence motif" description="'HIGH' region" evidence="1">
    <location>
        <begin position="10"/>
        <end position="20"/>
    </location>
</feature>
<feature type="short sequence motif" description="'KMSKS' region" evidence="1">
    <location>
        <begin position="236"/>
        <end position="240"/>
    </location>
</feature>
<feature type="binding site" evidence="1">
    <location>
        <position position="99"/>
    </location>
    <ligand>
        <name>Zn(2+)</name>
        <dbReference type="ChEBI" id="CHEBI:29105"/>
    </ligand>
</feature>
<feature type="binding site" evidence="1">
    <location>
        <position position="101"/>
    </location>
    <ligand>
        <name>Zn(2+)</name>
        <dbReference type="ChEBI" id="CHEBI:29105"/>
    </ligand>
</feature>
<feature type="binding site" evidence="1">
    <location>
        <position position="126"/>
    </location>
    <ligand>
        <name>Zn(2+)</name>
        <dbReference type="ChEBI" id="CHEBI:29105"/>
    </ligand>
</feature>
<feature type="binding site" evidence="1">
    <location>
        <position position="128"/>
    </location>
    <ligand>
        <name>Zn(2+)</name>
        <dbReference type="ChEBI" id="CHEBI:29105"/>
    </ligand>
</feature>
<feature type="binding site" evidence="1">
    <location>
        <position position="239"/>
    </location>
    <ligand>
        <name>ATP</name>
        <dbReference type="ChEBI" id="CHEBI:30616"/>
    </ligand>
</feature>
<proteinExistence type="inferred from homology"/>
<dbReference type="EC" id="6.1.1.17" evidence="1"/>
<dbReference type="EMBL" id="CP000112">
    <property type="protein sequence ID" value="ABB39444.1"/>
    <property type="molecule type" value="Genomic_DNA"/>
</dbReference>
<dbReference type="RefSeq" id="WP_011368479.1">
    <property type="nucleotide sequence ID" value="NC_007519.1"/>
</dbReference>
<dbReference type="SMR" id="Q30Y02"/>
<dbReference type="STRING" id="207559.Dde_2648"/>
<dbReference type="KEGG" id="dde:Dde_2648"/>
<dbReference type="eggNOG" id="COG0008">
    <property type="taxonomic scope" value="Bacteria"/>
</dbReference>
<dbReference type="HOGENOM" id="CLU_015768_6_3_7"/>
<dbReference type="Proteomes" id="UP000002710">
    <property type="component" value="Chromosome"/>
</dbReference>
<dbReference type="GO" id="GO:0005829">
    <property type="term" value="C:cytosol"/>
    <property type="evidence" value="ECO:0007669"/>
    <property type="project" value="TreeGrafter"/>
</dbReference>
<dbReference type="GO" id="GO:0005524">
    <property type="term" value="F:ATP binding"/>
    <property type="evidence" value="ECO:0007669"/>
    <property type="project" value="UniProtKB-UniRule"/>
</dbReference>
<dbReference type="GO" id="GO:0004818">
    <property type="term" value="F:glutamate-tRNA ligase activity"/>
    <property type="evidence" value="ECO:0007669"/>
    <property type="project" value="UniProtKB-UniRule"/>
</dbReference>
<dbReference type="GO" id="GO:0000049">
    <property type="term" value="F:tRNA binding"/>
    <property type="evidence" value="ECO:0007669"/>
    <property type="project" value="InterPro"/>
</dbReference>
<dbReference type="GO" id="GO:0008270">
    <property type="term" value="F:zinc ion binding"/>
    <property type="evidence" value="ECO:0007669"/>
    <property type="project" value="UniProtKB-UniRule"/>
</dbReference>
<dbReference type="GO" id="GO:0006424">
    <property type="term" value="P:glutamyl-tRNA aminoacylation"/>
    <property type="evidence" value="ECO:0007669"/>
    <property type="project" value="UniProtKB-UniRule"/>
</dbReference>
<dbReference type="CDD" id="cd00808">
    <property type="entry name" value="GluRS_core"/>
    <property type="match status" value="1"/>
</dbReference>
<dbReference type="FunFam" id="3.40.50.620:FF:000007">
    <property type="entry name" value="Glutamate--tRNA ligase"/>
    <property type="match status" value="1"/>
</dbReference>
<dbReference type="Gene3D" id="1.10.10.350">
    <property type="match status" value="1"/>
</dbReference>
<dbReference type="Gene3D" id="1.10.8.70">
    <property type="entry name" value="Glutamate-tRNA synthetase, class I, anticodon-binding domain 1"/>
    <property type="match status" value="1"/>
</dbReference>
<dbReference type="Gene3D" id="3.40.50.620">
    <property type="entry name" value="HUPs"/>
    <property type="match status" value="1"/>
</dbReference>
<dbReference type="HAMAP" id="MF_00022">
    <property type="entry name" value="Glu_tRNA_synth_type1"/>
    <property type="match status" value="1"/>
</dbReference>
<dbReference type="InterPro" id="IPR045462">
    <property type="entry name" value="aa-tRNA-synth_I_cd-bd"/>
</dbReference>
<dbReference type="InterPro" id="IPR020751">
    <property type="entry name" value="aa-tRNA-synth_I_codon-bd_sub2"/>
</dbReference>
<dbReference type="InterPro" id="IPR001412">
    <property type="entry name" value="aa-tRNA-synth_I_CS"/>
</dbReference>
<dbReference type="InterPro" id="IPR008925">
    <property type="entry name" value="aa_tRNA-synth_I_cd-bd_sf"/>
</dbReference>
<dbReference type="InterPro" id="IPR004527">
    <property type="entry name" value="Glu-tRNA-ligase_bac/mito"/>
</dbReference>
<dbReference type="InterPro" id="IPR020752">
    <property type="entry name" value="Glu-tRNA-synth_I_codon-bd_sub1"/>
</dbReference>
<dbReference type="InterPro" id="IPR000924">
    <property type="entry name" value="Glu/Gln-tRNA-synth"/>
</dbReference>
<dbReference type="InterPro" id="IPR020058">
    <property type="entry name" value="Glu/Gln-tRNA-synth_Ib_cat-dom"/>
</dbReference>
<dbReference type="InterPro" id="IPR049940">
    <property type="entry name" value="GluQ/Sye"/>
</dbReference>
<dbReference type="InterPro" id="IPR033910">
    <property type="entry name" value="GluRS_core"/>
</dbReference>
<dbReference type="InterPro" id="IPR014729">
    <property type="entry name" value="Rossmann-like_a/b/a_fold"/>
</dbReference>
<dbReference type="NCBIfam" id="TIGR00464">
    <property type="entry name" value="gltX_bact"/>
    <property type="match status" value="1"/>
</dbReference>
<dbReference type="NCBIfam" id="NF004314">
    <property type="entry name" value="PRK05710.1-3"/>
    <property type="match status" value="1"/>
</dbReference>
<dbReference type="PANTHER" id="PTHR43311">
    <property type="entry name" value="GLUTAMATE--TRNA LIGASE"/>
    <property type="match status" value="1"/>
</dbReference>
<dbReference type="PANTHER" id="PTHR43311:SF2">
    <property type="entry name" value="GLUTAMATE--TRNA LIGASE, MITOCHONDRIAL-RELATED"/>
    <property type="match status" value="1"/>
</dbReference>
<dbReference type="Pfam" id="PF19269">
    <property type="entry name" value="Anticodon_2"/>
    <property type="match status" value="1"/>
</dbReference>
<dbReference type="Pfam" id="PF00749">
    <property type="entry name" value="tRNA-synt_1c"/>
    <property type="match status" value="1"/>
</dbReference>
<dbReference type="PRINTS" id="PR00987">
    <property type="entry name" value="TRNASYNTHGLU"/>
</dbReference>
<dbReference type="SUPFAM" id="SSF48163">
    <property type="entry name" value="An anticodon-binding domain of class I aminoacyl-tRNA synthetases"/>
    <property type="match status" value="1"/>
</dbReference>
<dbReference type="SUPFAM" id="SSF52374">
    <property type="entry name" value="Nucleotidylyl transferase"/>
    <property type="match status" value="1"/>
</dbReference>
<dbReference type="PROSITE" id="PS00178">
    <property type="entry name" value="AA_TRNA_LIGASE_I"/>
    <property type="match status" value="1"/>
</dbReference>
<keyword id="KW-0030">Aminoacyl-tRNA synthetase</keyword>
<keyword id="KW-0067">ATP-binding</keyword>
<keyword id="KW-0963">Cytoplasm</keyword>
<keyword id="KW-0436">Ligase</keyword>
<keyword id="KW-0479">Metal-binding</keyword>
<keyword id="KW-0547">Nucleotide-binding</keyword>
<keyword id="KW-0648">Protein biosynthesis</keyword>
<keyword id="KW-1185">Reference proteome</keyword>
<keyword id="KW-0862">Zinc</keyword>
<evidence type="ECO:0000255" key="1">
    <source>
        <dbReference type="HAMAP-Rule" id="MF_00022"/>
    </source>
</evidence>
<reference key="1">
    <citation type="journal article" date="2011" name="J. Bacteriol.">
        <title>Complete genome sequence and updated annotation of Desulfovibrio alaskensis G20.</title>
        <authorList>
            <person name="Hauser L.J."/>
            <person name="Land M.L."/>
            <person name="Brown S.D."/>
            <person name="Larimer F."/>
            <person name="Keller K.L."/>
            <person name="Rapp-Giles B.J."/>
            <person name="Price M.N."/>
            <person name="Lin M."/>
            <person name="Bruce D.C."/>
            <person name="Detter J.C."/>
            <person name="Tapia R."/>
            <person name="Han C.S."/>
            <person name="Goodwin L.A."/>
            <person name="Cheng J.F."/>
            <person name="Pitluck S."/>
            <person name="Copeland A."/>
            <person name="Lucas S."/>
            <person name="Nolan M."/>
            <person name="Lapidus A.L."/>
            <person name="Palumbo A.V."/>
            <person name="Wall J.D."/>
        </authorList>
    </citation>
    <scope>NUCLEOTIDE SEQUENCE [LARGE SCALE GENOMIC DNA]</scope>
    <source>
        <strain>ATCC BAA-1058 / DSM 17464 / G20</strain>
    </source>
</reference>
<sequence>MSKVVTRFAPSPTGHLHLGGARTAVFSWLLARHFGGEFVLRIEDTDMERSKQEYTDSILASMAWLGLDWDGEPVYQSRRFDLYNEYIDRLLAEGKAYWCECSPEEVEAMRETARARGLKPKYNGRCRERGLQGGEGRVVRLKAPLTGKTVFTDLVKGTIAFDNSELDDMIIRRADGSPTYNLAVVVDDATMGVTHVLRGDDHVNNTPKQILLYEALGLPVPEFGHVPMILGPDRQKLSKRHGAKAVIDYKETGLLPQALVNYLVRLGWSYGDQEKFSLDELIEKFSTDNLSRSAAGFDPEKLQWLNGQYIRETPDDQLAGLVRPFLAETGYGQIDAAFLTVAAGLYKERAHDLVELAAAMKPVLCADDALEFDAKAVEKALTAEGRGHLAALRQAFAACADFDGHTAHEVLQRYVADNGLKFKAVGPPLRVALLGAMGGPDLSAVMGLLGRERTLARLDRAAAL</sequence>
<protein>
    <recommendedName>
        <fullName evidence="1">Glutamate--tRNA ligase</fullName>
        <ecNumber evidence="1">6.1.1.17</ecNumber>
    </recommendedName>
    <alternativeName>
        <fullName evidence="1">Glutamyl-tRNA synthetase</fullName>
        <shortName evidence="1">GluRS</shortName>
    </alternativeName>
</protein>
<organism>
    <name type="scientific">Oleidesulfovibrio alaskensis (strain ATCC BAA-1058 / DSM 17464 / G20)</name>
    <name type="common">Desulfovibrio alaskensis</name>
    <dbReference type="NCBI Taxonomy" id="207559"/>
    <lineage>
        <taxon>Bacteria</taxon>
        <taxon>Pseudomonadati</taxon>
        <taxon>Thermodesulfobacteriota</taxon>
        <taxon>Desulfovibrionia</taxon>
        <taxon>Desulfovibrionales</taxon>
        <taxon>Desulfovibrionaceae</taxon>
        <taxon>Oleidesulfovibrio</taxon>
    </lineage>
</organism>
<accession>Q30Y02</accession>
<name>SYE_OLEA2</name>
<comment type="function">
    <text evidence="1">Catalyzes the attachment of glutamate to tRNA(Glu) in a two-step reaction: glutamate is first activated by ATP to form Glu-AMP and then transferred to the acceptor end of tRNA(Glu).</text>
</comment>
<comment type="catalytic activity">
    <reaction evidence="1">
        <text>tRNA(Glu) + L-glutamate + ATP = L-glutamyl-tRNA(Glu) + AMP + diphosphate</text>
        <dbReference type="Rhea" id="RHEA:23540"/>
        <dbReference type="Rhea" id="RHEA-COMP:9663"/>
        <dbReference type="Rhea" id="RHEA-COMP:9680"/>
        <dbReference type="ChEBI" id="CHEBI:29985"/>
        <dbReference type="ChEBI" id="CHEBI:30616"/>
        <dbReference type="ChEBI" id="CHEBI:33019"/>
        <dbReference type="ChEBI" id="CHEBI:78442"/>
        <dbReference type="ChEBI" id="CHEBI:78520"/>
        <dbReference type="ChEBI" id="CHEBI:456215"/>
        <dbReference type="EC" id="6.1.1.17"/>
    </reaction>
</comment>
<comment type="cofactor">
    <cofactor evidence="1">
        <name>Zn(2+)</name>
        <dbReference type="ChEBI" id="CHEBI:29105"/>
    </cofactor>
    <text evidence="1">Binds 1 zinc ion per subunit.</text>
</comment>
<comment type="subunit">
    <text evidence="1">Monomer.</text>
</comment>
<comment type="subcellular location">
    <subcellularLocation>
        <location evidence="1">Cytoplasm</location>
    </subcellularLocation>
</comment>
<comment type="similarity">
    <text evidence="1">Belongs to the class-I aminoacyl-tRNA synthetase family. Glutamate--tRNA ligase type 1 subfamily.</text>
</comment>
<gene>
    <name evidence="1" type="primary">gltX</name>
    <name type="ordered locus">Dde_2648</name>
</gene>